<protein>
    <recommendedName>
        <fullName>Calmodulin</fullName>
        <shortName>CaM</shortName>
    </recommendedName>
</protein>
<dbReference type="BMRB" id="P62151"/>
<dbReference type="SMR" id="P62151"/>
<dbReference type="GO" id="GO:0016460">
    <property type="term" value="C:myosin II complex"/>
    <property type="evidence" value="ECO:0007669"/>
    <property type="project" value="TreeGrafter"/>
</dbReference>
<dbReference type="GO" id="GO:0005509">
    <property type="term" value="F:calcium ion binding"/>
    <property type="evidence" value="ECO:0007669"/>
    <property type="project" value="InterPro"/>
</dbReference>
<dbReference type="CDD" id="cd00051">
    <property type="entry name" value="EFh"/>
    <property type="match status" value="2"/>
</dbReference>
<dbReference type="FunFam" id="1.10.238.10:FF:000527">
    <property type="entry name" value="Calmodulin-3"/>
    <property type="match status" value="1"/>
</dbReference>
<dbReference type="Gene3D" id="1.10.238.10">
    <property type="entry name" value="EF-hand"/>
    <property type="match status" value="3"/>
</dbReference>
<dbReference type="InterPro" id="IPR050230">
    <property type="entry name" value="CALM/Myosin/TropC-like"/>
</dbReference>
<dbReference type="InterPro" id="IPR011992">
    <property type="entry name" value="EF-hand-dom_pair"/>
</dbReference>
<dbReference type="InterPro" id="IPR018247">
    <property type="entry name" value="EF_Hand_1_Ca_BS"/>
</dbReference>
<dbReference type="InterPro" id="IPR002048">
    <property type="entry name" value="EF_hand_dom"/>
</dbReference>
<dbReference type="PANTHER" id="PTHR23048:SF0">
    <property type="entry name" value="CALMODULIN LIKE 3"/>
    <property type="match status" value="1"/>
</dbReference>
<dbReference type="PANTHER" id="PTHR23048">
    <property type="entry name" value="MYOSIN LIGHT CHAIN 1, 3"/>
    <property type="match status" value="1"/>
</dbReference>
<dbReference type="Pfam" id="PF13499">
    <property type="entry name" value="EF-hand_7"/>
    <property type="match status" value="2"/>
</dbReference>
<dbReference type="PRINTS" id="PR00450">
    <property type="entry name" value="RECOVERIN"/>
</dbReference>
<dbReference type="SMART" id="SM00054">
    <property type="entry name" value="EFh"/>
    <property type="match status" value="4"/>
</dbReference>
<dbReference type="SUPFAM" id="SSF47473">
    <property type="entry name" value="EF-hand"/>
    <property type="match status" value="1"/>
</dbReference>
<dbReference type="PROSITE" id="PS00018">
    <property type="entry name" value="EF_HAND_1"/>
    <property type="match status" value="4"/>
</dbReference>
<dbReference type="PROSITE" id="PS50222">
    <property type="entry name" value="EF_HAND_2"/>
    <property type="match status" value="4"/>
</dbReference>
<comment type="function">
    <text evidence="2">Calmodulin acts as part of a calcium signal transduction pathway by mediating the control of a large number of enzymes, ion channels, aquaporins and other proteins through calcium-binding. Calcium-binding is required for the activation of calmodulin. Among the enzymes to be stimulated by the calmodulin-calcium complex are a number of protein kinases, such as myosin light-chain kinases and calmodulin-dependent protein kinase type II (CaMK2), and phosphatases.</text>
</comment>
<comment type="miscellaneous">
    <text evidence="1">This protein has four functional calcium-binding sites.</text>
</comment>
<comment type="similarity">
    <text evidence="5">Belongs to the calmodulin family.</text>
</comment>
<sequence length="149" mass="16838">MADQLTEEQIAEFKEAFSLFDKDGDGTITTKELGTVMRSLGQNPTEAELQDMINEVDADGNGTIDFPEFLTMMARKMKDTDSEEEIREAFRVFDKDGNGYISAAELRHVMTNLGEKLTDEEVDEMIREADIDGDGQVNYEEFVQMMTAK</sequence>
<organism>
    <name type="scientific">Tetronarce californica</name>
    <name type="common">Pacific electric ray</name>
    <name type="synonym">Torpedo californica</name>
    <dbReference type="NCBI Taxonomy" id="7787"/>
    <lineage>
        <taxon>Eukaryota</taxon>
        <taxon>Metazoa</taxon>
        <taxon>Chordata</taxon>
        <taxon>Craniata</taxon>
        <taxon>Vertebrata</taxon>
        <taxon>Chondrichthyes</taxon>
        <taxon>Elasmobranchii</taxon>
        <taxon>Batoidea</taxon>
        <taxon>Torpediniformes</taxon>
        <taxon>Torpedinidae</taxon>
        <taxon>Tetronarce</taxon>
    </lineage>
</organism>
<feature type="initiator methionine" description="Removed" evidence="4">
    <location>
        <position position="1"/>
    </location>
</feature>
<feature type="chain" id="PRO_0000198241" description="Calmodulin">
    <location>
        <begin position="2"/>
        <end position="149"/>
    </location>
</feature>
<feature type="domain" description="EF-hand 1" evidence="3">
    <location>
        <begin position="8"/>
        <end position="43"/>
    </location>
</feature>
<feature type="domain" description="EF-hand 2" evidence="3">
    <location>
        <begin position="44"/>
        <end position="79"/>
    </location>
</feature>
<feature type="domain" description="EF-hand 3" evidence="3">
    <location>
        <begin position="81"/>
        <end position="116"/>
    </location>
</feature>
<feature type="domain" description="EF-hand 4" evidence="3">
    <location>
        <begin position="117"/>
        <end position="149"/>
    </location>
</feature>
<feature type="binding site" evidence="3">
    <location>
        <position position="21"/>
    </location>
    <ligand>
        <name>Ca(2+)</name>
        <dbReference type="ChEBI" id="CHEBI:29108"/>
        <label>1</label>
    </ligand>
</feature>
<feature type="binding site" evidence="3">
    <location>
        <position position="23"/>
    </location>
    <ligand>
        <name>Ca(2+)</name>
        <dbReference type="ChEBI" id="CHEBI:29108"/>
        <label>1</label>
    </ligand>
</feature>
<feature type="binding site" evidence="3">
    <location>
        <position position="25"/>
    </location>
    <ligand>
        <name>Ca(2+)</name>
        <dbReference type="ChEBI" id="CHEBI:29108"/>
        <label>1</label>
    </ligand>
</feature>
<feature type="binding site" evidence="3">
    <location>
        <position position="27"/>
    </location>
    <ligand>
        <name>Ca(2+)</name>
        <dbReference type="ChEBI" id="CHEBI:29108"/>
        <label>1</label>
    </ligand>
</feature>
<feature type="binding site" evidence="3">
    <location>
        <position position="32"/>
    </location>
    <ligand>
        <name>Ca(2+)</name>
        <dbReference type="ChEBI" id="CHEBI:29108"/>
        <label>1</label>
    </ligand>
</feature>
<feature type="binding site" evidence="3">
    <location>
        <position position="57"/>
    </location>
    <ligand>
        <name>Ca(2+)</name>
        <dbReference type="ChEBI" id="CHEBI:29108"/>
        <label>2</label>
    </ligand>
</feature>
<feature type="binding site" evidence="3">
    <location>
        <position position="59"/>
    </location>
    <ligand>
        <name>Ca(2+)</name>
        <dbReference type="ChEBI" id="CHEBI:29108"/>
        <label>2</label>
    </ligand>
</feature>
<feature type="binding site" evidence="3">
    <location>
        <position position="61"/>
    </location>
    <ligand>
        <name>Ca(2+)</name>
        <dbReference type="ChEBI" id="CHEBI:29108"/>
        <label>2</label>
    </ligand>
</feature>
<feature type="binding site" evidence="3">
    <location>
        <position position="63"/>
    </location>
    <ligand>
        <name>Ca(2+)</name>
        <dbReference type="ChEBI" id="CHEBI:29108"/>
        <label>2</label>
    </ligand>
</feature>
<feature type="binding site" evidence="3">
    <location>
        <position position="68"/>
    </location>
    <ligand>
        <name>Ca(2+)</name>
        <dbReference type="ChEBI" id="CHEBI:29108"/>
        <label>2</label>
    </ligand>
</feature>
<feature type="binding site" evidence="3">
    <location>
        <position position="94"/>
    </location>
    <ligand>
        <name>Ca(2+)</name>
        <dbReference type="ChEBI" id="CHEBI:29108"/>
        <label>3</label>
    </ligand>
</feature>
<feature type="binding site" evidence="3">
    <location>
        <position position="96"/>
    </location>
    <ligand>
        <name>Ca(2+)</name>
        <dbReference type="ChEBI" id="CHEBI:29108"/>
        <label>3</label>
    </ligand>
</feature>
<feature type="binding site" evidence="3">
    <location>
        <position position="98"/>
    </location>
    <ligand>
        <name>Ca(2+)</name>
        <dbReference type="ChEBI" id="CHEBI:29108"/>
        <label>3</label>
    </ligand>
</feature>
<feature type="binding site" evidence="3">
    <location>
        <position position="100"/>
    </location>
    <ligand>
        <name>Ca(2+)</name>
        <dbReference type="ChEBI" id="CHEBI:29108"/>
        <label>3</label>
    </ligand>
</feature>
<feature type="binding site" evidence="3">
    <location>
        <position position="105"/>
    </location>
    <ligand>
        <name>Ca(2+)</name>
        <dbReference type="ChEBI" id="CHEBI:29108"/>
        <label>3</label>
    </ligand>
</feature>
<feature type="binding site" evidence="3">
    <location>
        <position position="130"/>
    </location>
    <ligand>
        <name>Ca(2+)</name>
        <dbReference type="ChEBI" id="CHEBI:29108"/>
        <label>4</label>
    </ligand>
</feature>
<feature type="binding site" evidence="3">
    <location>
        <position position="132"/>
    </location>
    <ligand>
        <name>Ca(2+)</name>
        <dbReference type="ChEBI" id="CHEBI:29108"/>
        <label>4</label>
    </ligand>
</feature>
<feature type="binding site" evidence="3">
    <location>
        <position position="134"/>
    </location>
    <ligand>
        <name>Ca(2+)</name>
        <dbReference type="ChEBI" id="CHEBI:29108"/>
        <label>4</label>
    </ligand>
</feature>
<feature type="binding site" evidence="3">
    <location>
        <position position="136"/>
    </location>
    <ligand>
        <name>Ca(2+)</name>
        <dbReference type="ChEBI" id="CHEBI:29108"/>
        <label>4</label>
    </ligand>
</feature>
<feature type="binding site" evidence="3">
    <location>
        <position position="141"/>
    </location>
    <ligand>
        <name>Ca(2+)</name>
        <dbReference type="ChEBI" id="CHEBI:29108"/>
        <label>4</label>
    </ligand>
</feature>
<feature type="modified residue" description="N-acetylalanine" evidence="4">
    <location>
        <position position="2"/>
    </location>
</feature>
<feature type="modified residue" description="N6,N6,N6-trimethyllysine" evidence="4">
    <location>
        <position position="116"/>
    </location>
</feature>
<accession>P62151</accession>
<accession>P02593</accession>
<accession>P70667</accession>
<accession>P99014</accession>
<accession>Q61379</accession>
<accession>Q61380</accession>
<reference key="1">
    <citation type="submission" date="2002-10" db="UniProtKB">
        <authorList>
            <person name="Weise C."/>
        </authorList>
    </citation>
    <scope>PROTEIN SEQUENCE OF 2-149</scope>
    <scope>ACETYLATION AT ALA-2</scope>
    <scope>METHYLATION AT LYS-116</scope>
</reference>
<evidence type="ECO:0000250" key="1"/>
<evidence type="ECO:0000250" key="2">
    <source>
        <dbReference type="UniProtKB" id="P0DP23"/>
    </source>
</evidence>
<evidence type="ECO:0000255" key="3">
    <source>
        <dbReference type="PROSITE-ProRule" id="PRU00448"/>
    </source>
</evidence>
<evidence type="ECO:0000269" key="4">
    <source ref="1"/>
</evidence>
<evidence type="ECO:0000305" key="5"/>
<proteinExistence type="evidence at protein level"/>
<name>CALM_TETCF</name>
<keyword id="KW-0007">Acetylation</keyword>
<keyword id="KW-0106">Calcium</keyword>
<keyword id="KW-0903">Direct protein sequencing</keyword>
<keyword id="KW-0479">Metal-binding</keyword>
<keyword id="KW-0488">Methylation</keyword>
<keyword id="KW-0677">Repeat</keyword>